<evidence type="ECO:0000255" key="1">
    <source>
        <dbReference type="HAMAP-Rule" id="MF_00362"/>
    </source>
</evidence>
<evidence type="ECO:0000305" key="2"/>
<comment type="function">
    <text evidence="1">Forms part of the ribosomal stalk, playing a central role in the interaction of the ribosome with GTP-bound translation factors.</text>
</comment>
<comment type="subunit">
    <text evidence="1">Part of the ribosomal stalk of the 50S ribosomal subunit. The N-terminus interacts with L11 and the large rRNA to form the base of the stalk. The C-terminus forms an elongated spine to which L12 dimers bind in a sequential fashion forming a multimeric L10(L12)X complex.</text>
</comment>
<comment type="similarity">
    <text evidence="1">Belongs to the universal ribosomal protein uL10 family.</text>
</comment>
<sequence length="165" mass="17801">MALNLQDKQAIVAEVSEVAKGALSAVVADSRGVTVDKMTELRKAGREAGVYMRVVRNTLLRRVVEGTQFECLKDTFVGPTLIAYSMEHPGAAARLFKEFAKANAKFEVKAAAFEGELIPASQIDRLATLPTYEEAIARLMATMKEASAGKLVRTLAAVRDAKEAA</sequence>
<accession>B4TCS2</accession>
<gene>
    <name evidence="1" type="primary">rplJ</name>
    <name type="ordered locus">SeHA_C4480</name>
</gene>
<keyword id="KW-0687">Ribonucleoprotein</keyword>
<keyword id="KW-0689">Ribosomal protein</keyword>
<keyword id="KW-0694">RNA-binding</keyword>
<keyword id="KW-0699">rRNA-binding</keyword>
<reference key="1">
    <citation type="journal article" date="2011" name="J. Bacteriol.">
        <title>Comparative genomics of 28 Salmonella enterica isolates: evidence for CRISPR-mediated adaptive sublineage evolution.</title>
        <authorList>
            <person name="Fricke W.F."/>
            <person name="Mammel M.K."/>
            <person name="McDermott P.F."/>
            <person name="Tartera C."/>
            <person name="White D.G."/>
            <person name="Leclerc J.E."/>
            <person name="Ravel J."/>
            <person name="Cebula T.A."/>
        </authorList>
    </citation>
    <scope>NUCLEOTIDE SEQUENCE [LARGE SCALE GENOMIC DNA]</scope>
    <source>
        <strain>SL476</strain>
    </source>
</reference>
<protein>
    <recommendedName>
        <fullName evidence="1">Large ribosomal subunit protein uL10</fullName>
    </recommendedName>
    <alternativeName>
        <fullName evidence="2">50S ribosomal protein L10</fullName>
    </alternativeName>
</protein>
<dbReference type="EMBL" id="CP001120">
    <property type="protein sequence ID" value="ACF66157.1"/>
    <property type="molecule type" value="Genomic_DNA"/>
</dbReference>
<dbReference type="RefSeq" id="WP_001207203.1">
    <property type="nucleotide sequence ID" value="NC_011083.1"/>
</dbReference>
<dbReference type="GeneID" id="93756505"/>
<dbReference type="KEGG" id="seh:SeHA_C4480"/>
<dbReference type="HOGENOM" id="CLU_092227_0_2_6"/>
<dbReference type="Proteomes" id="UP000001866">
    <property type="component" value="Chromosome"/>
</dbReference>
<dbReference type="GO" id="GO:0015934">
    <property type="term" value="C:large ribosomal subunit"/>
    <property type="evidence" value="ECO:0007669"/>
    <property type="project" value="InterPro"/>
</dbReference>
<dbReference type="GO" id="GO:0070180">
    <property type="term" value="F:large ribosomal subunit rRNA binding"/>
    <property type="evidence" value="ECO:0007669"/>
    <property type="project" value="UniProtKB-UniRule"/>
</dbReference>
<dbReference type="GO" id="GO:0003735">
    <property type="term" value="F:structural constituent of ribosome"/>
    <property type="evidence" value="ECO:0007669"/>
    <property type="project" value="InterPro"/>
</dbReference>
<dbReference type="GO" id="GO:0006412">
    <property type="term" value="P:translation"/>
    <property type="evidence" value="ECO:0007669"/>
    <property type="project" value="UniProtKB-UniRule"/>
</dbReference>
<dbReference type="CDD" id="cd05797">
    <property type="entry name" value="Ribosomal_L10"/>
    <property type="match status" value="1"/>
</dbReference>
<dbReference type="FunFam" id="3.30.70.1730:FF:000001">
    <property type="entry name" value="50S ribosomal protein L10"/>
    <property type="match status" value="1"/>
</dbReference>
<dbReference type="Gene3D" id="3.30.70.1730">
    <property type="match status" value="1"/>
</dbReference>
<dbReference type="Gene3D" id="6.10.250.2350">
    <property type="match status" value="1"/>
</dbReference>
<dbReference type="HAMAP" id="MF_00362">
    <property type="entry name" value="Ribosomal_uL10"/>
    <property type="match status" value="1"/>
</dbReference>
<dbReference type="InterPro" id="IPR001790">
    <property type="entry name" value="Ribosomal_uL10"/>
</dbReference>
<dbReference type="InterPro" id="IPR043141">
    <property type="entry name" value="Ribosomal_uL10-like_sf"/>
</dbReference>
<dbReference type="InterPro" id="IPR022973">
    <property type="entry name" value="Ribosomal_uL10_bac"/>
</dbReference>
<dbReference type="InterPro" id="IPR047865">
    <property type="entry name" value="Ribosomal_uL10_bac_type"/>
</dbReference>
<dbReference type="InterPro" id="IPR002363">
    <property type="entry name" value="Ribosomal_uL10_CS_bac"/>
</dbReference>
<dbReference type="NCBIfam" id="NF000955">
    <property type="entry name" value="PRK00099.1-1"/>
    <property type="match status" value="1"/>
</dbReference>
<dbReference type="PANTHER" id="PTHR11560">
    <property type="entry name" value="39S RIBOSOMAL PROTEIN L10, MITOCHONDRIAL"/>
    <property type="match status" value="1"/>
</dbReference>
<dbReference type="Pfam" id="PF00466">
    <property type="entry name" value="Ribosomal_L10"/>
    <property type="match status" value="1"/>
</dbReference>
<dbReference type="SUPFAM" id="SSF160369">
    <property type="entry name" value="Ribosomal protein L10-like"/>
    <property type="match status" value="1"/>
</dbReference>
<dbReference type="PROSITE" id="PS01109">
    <property type="entry name" value="RIBOSOMAL_L10"/>
    <property type="match status" value="1"/>
</dbReference>
<organism>
    <name type="scientific">Salmonella heidelberg (strain SL476)</name>
    <dbReference type="NCBI Taxonomy" id="454169"/>
    <lineage>
        <taxon>Bacteria</taxon>
        <taxon>Pseudomonadati</taxon>
        <taxon>Pseudomonadota</taxon>
        <taxon>Gammaproteobacteria</taxon>
        <taxon>Enterobacterales</taxon>
        <taxon>Enterobacteriaceae</taxon>
        <taxon>Salmonella</taxon>
    </lineage>
</organism>
<feature type="chain" id="PRO_1000121010" description="Large ribosomal subunit protein uL10">
    <location>
        <begin position="1"/>
        <end position="165"/>
    </location>
</feature>
<name>RL10_SALHS</name>
<proteinExistence type="inferred from homology"/>